<accession>Q79V62</accession>
<accession>Q8RR35</accession>
<organism>
    <name type="scientific">Thermosynechococcus vestitus (strain NIES-2133 / IAM M-273 / BP-1)</name>
    <dbReference type="NCBI Taxonomy" id="197221"/>
    <lineage>
        <taxon>Bacteria</taxon>
        <taxon>Bacillati</taxon>
        <taxon>Cyanobacteriota</taxon>
        <taxon>Cyanophyceae</taxon>
        <taxon>Acaryochloridales</taxon>
        <taxon>Thermosynechococcaceae</taxon>
        <taxon>Thermosynechococcus</taxon>
    </lineage>
</organism>
<keyword id="KW-0002">3D-structure</keyword>
<keyword id="KW-0090">Biological rhythms</keyword>
<keyword id="KW-1185">Reference proteome</keyword>
<dbReference type="EMBL" id="AB071375">
    <property type="protein sequence ID" value="BAB85983.1"/>
    <property type="molecule type" value="Genomic_DNA"/>
</dbReference>
<dbReference type="EMBL" id="BA000039">
    <property type="protein sequence ID" value="BAC08033.1"/>
    <property type="molecule type" value="Genomic_DNA"/>
</dbReference>
<dbReference type="RefSeq" id="NP_681271.1">
    <property type="nucleotide sequence ID" value="NC_004113.1"/>
</dbReference>
<dbReference type="RefSeq" id="WP_011056332.1">
    <property type="nucleotide sequence ID" value="NC_004113.1"/>
</dbReference>
<dbReference type="PDB" id="1Q6A">
    <property type="method" value="NMR"/>
    <property type="chains" value="A/B=180-283"/>
</dbReference>
<dbReference type="PDB" id="1Q6B">
    <property type="method" value="NMR"/>
    <property type="chains" value="A/B=180-283"/>
</dbReference>
<dbReference type="PDB" id="1SUY">
    <property type="method" value="NMR"/>
    <property type="chains" value="A/B=180-283"/>
</dbReference>
<dbReference type="PDB" id="1SV1">
    <property type="method" value="NMR"/>
    <property type="chains" value="A/B=180-283"/>
</dbReference>
<dbReference type="PDB" id="1V2Z">
    <property type="method" value="X-ray"/>
    <property type="resolution" value="1.80 A"/>
    <property type="chains" value="A=174-283"/>
</dbReference>
<dbReference type="PDB" id="5JWR">
    <property type="method" value="X-ray"/>
    <property type="resolution" value="2.61 A"/>
    <property type="chains" value="E/F/G/H=147-283"/>
</dbReference>
<dbReference type="PDBsum" id="1Q6A"/>
<dbReference type="PDBsum" id="1Q6B"/>
<dbReference type="PDBsum" id="1SUY"/>
<dbReference type="PDBsum" id="1SV1"/>
<dbReference type="PDBsum" id="1V2Z"/>
<dbReference type="PDBsum" id="5JWR"/>
<dbReference type="BMRB" id="Q79V62"/>
<dbReference type="SMR" id="Q79V62"/>
<dbReference type="DIP" id="DIP-29355N"/>
<dbReference type="IntAct" id="Q79V62">
    <property type="interactions" value="1"/>
</dbReference>
<dbReference type="MINT" id="Q79V62"/>
<dbReference type="STRING" id="197221.gene:10747070"/>
<dbReference type="EnsemblBacteria" id="BAC08033">
    <property type="protein sequence ID" value="BAC08033"/>
    <property type="gene ID" value="BAC08033"/>
</dbReference>
<dbReference type="KEGG" id="tel:tlr0481"/>
<dbReference type="PATRIC" id="fig|197221.4.peg.506"/>
<dbReference type="eggNOG" id="ENOG502Z8HQ">
    <property type="taxonomic scope" value="Bacteria"/>
</dbReference>
<dbReference type="EvolutionaryTrace" id="Q79V62"/>
<dbReference type="Proteomes" id="UP000000440">
    <property type="component" value="Chromosome"/>
</dbReference>
<dbReference type="GO" id="GO:0042802">
    <property type="term" value="F:identical protein binding"/>
    <property type="evidence" value="ECO:0000353"/>
    <property type="project" value="IntAct"/>
</dbReference>
<dbReference type="GO" id="GO:0007623">
    <property type="term" value="P:circadian rhythm"/>
    <property type="evidence" value="ECO:0000304"/>
    <property type="project" value="UniProtKB"/>
</dbReference>
<dbReference type="Gene3D" id="3.40.50.2300">
    <property type="match status" value="1"/>
</dbReference>
<dbReference type="Gene3D" id="1.10.1240.30">
    <property type="entry name" value="KaiA/RbsU domain"/>
    <property type="match status" value="1"/>
</dbReference>
<dbReference type="InterPro" id="IPR011006">
    <property type="entry name" value="CheY-like_superfamily"/>
</dbReference>
<dbReference type="InterPro" id="IPR011648">
    <property type="entry name" value="Circadian_clock_KaiA"/>
</dbReference>
<dbReference type="InterPro" id="IPR020844">
    <property type="entry name" value="Circadian_clock_KaiA_N"/>
</dbReference>
<dbReference type="InterPro" id="IPR020856">
    <property type="entry name" value="Circadian_clock_protein_KaiA_C"/>
</dbReference>
<dbReference type="InterPro" id="IPR017944">
    <property type="entry name" value="KaiA/RbsU_helical_domain_sf"/>
</dbReference>
<dbReference type="Pfam" id="PF07688">
    <property type="entry name" value="KaiA"/>
    <property type="match status" value="1"/>
</dbReference>
<dbReference type="Pfam" id="PF21714">
    <property type="entry name" value="KaiA_N"/>
    <property type="match status" value="1"/>
</dbReference>
<dbReference type="SMART" id="SM01247">
    <property type="entry name" value="KaiA"/>
    <property type="match status" value="1"/>
</dbReference>
<dbReference type="SUPFAM" id="SSF52172">
    <property type="entry name" value="CheY-like"/>
    <property type="match status" value="1"/>
</dbReference>
<dbReference type="SUPFAM" id="SSF101215">
    <property type="entry name" value="KaiA/RbsU domain"/>
    <property type="match status" value="1"/>
</dbReference>
<dbReference type="PROSITE" id="PS51431">
    <property type="entry name" value="KAIA_C"/>
    <property type="match status" value="1"/>
</dbReference>
<dbReference type="PROSITE" id="PS51430">
    <property type="entry name" value="KAIA_N"/>
    <property type="match status" value="1"/>
</dbReference>
<proteinExistence type="evidence at protein level"/>
<name>KAIA_THEVB</name>
<protein>
    <recommendedName>
        <fullName evidence="7">Circadian clock oscillator protein KaiA</fullName>
    </recommendedName>
</protein>
<reference evidence="10" key="1">
    <citation type="submission" date="2001-09" db="EMBL/GenBank/DDBJ databases">
        <title>Circadian clock gene cluster kaiABC in Synechococcus elongatus.</title>
        <authorList>
            <person name="Uzumaki T."/>
            <person name="Hayashi F."/>
            <person name="Onai K."/>
            <person name="Ishiura M."/>
        </authorList>
    </citation>
    <scope>NUCLEOTIDE SEQUENCE [GENOMIC DNA]</scope>
    <source>
        <strain>NIES-2133 / IAM M-273 / BP-1</strain>
    </source>
</reference>
<reference evidence="11" key="2">
    <citation type="journal article" date="2002" name="DNA Res.">
        <title>Complete genome structure of the thermophilic cyanobacterium Thermosynechococcus elongatus BP-1.</title>
        <authorList>
            <person name="Nakamura Y."/>
            <person name="Kaneko T."/>
            <person name="Sato S."/>
            <person name="Ikeuchi M."/>
            <person name="Katoh H."/>
            <person name="Sasamoto S."/>
            <person name="Watanabe A."/>
            <person name="Iriguchi M."/>
            <person name="Kawashima K."/>
            <person name="Kimura T."/>
            <person name="Kishida Y."/>
            <person name="Kiyokawa C."/>
            <person name="Kohara M."/>
            <person name="Matsumoto M."/>
            <person name="Matsuno A."/>
            <person name="Nakazaki N."/>
            <person name="Shimpo S."/>
            <person name="Sugimoto M."/>
            <person name="Takeuchi C."/>
            <person name="Yamada M."/>
            <person name="Tabata S."/>
        </authorList>
    </citation>
    <scope>NUCLEOTIDE SEQUENCE [LARGE SCALE GENOMIC DNA]</scope>
    <source>
        <strain>NIES-2133 / IAM M-273 / BP-1</strain>
    </source>
</reference>
<reference key="3">
    <citation type="journal article" date="2014" name="J. Mol. Biol.">
        <title>Cooperative KaiA-KaiB-KaiC interactions affect KaiB/SasA competition in the circadian clock of cyanobacteria.</title>
        <authorList>
            <person name="Tseng R."/>
            <person name="Chang Y.G."/>
            <person name="Bravo I."/>
            <person name="Latham R."/>
            <person name="Chaudhary A."/>
            <person name="Kuo N.W."/>
            <person name="Liwang A."/>
        </authorList>
    </citation>
    <scope>FUNCTION</scope>
    <scope>SUBUNIT</scope>
    <scope>MUTAGENESIS BY DOMAIN DELETION</scope>
    <source>
        <strain>NIES-2133 / IAM M-273 / BP-1</strain>
    </source>
</reference>
<reference evidence="16" key="4">
    <citation type="journal article" date="2004" name="Nat. Struct. Mol. Biol.">
        <title>Crystal structure of the C-terminal clock-oscillator domain of the cyanobacterial KaiA protein.</title>
        <authorList>
            <person name="Uzumaki T."/>
            <person name="Fujita M."/>
            <person name="Nakatsu T."/>
            <person name="Hayashi F."/>
            <person name="Shibata H."/>
            <person name="Itoh N."/>
            <person name="Kato H."/>
            <person name="Ishiura M."/>
        </authorList>
    </citation>
    <scope>X-RAY CRYSTALLOGRAPHY (1.8 ANGSTROMS) OF 174-278</scope>
    <scope>MUTAGENESIS OF TYR-204; ASP-266 AND HIS-270</scope>
    <source>
        <strain>NIES-2133 / IAM M-273 / BP-1</strain>
    </source>
</reference>
<reference evidence="12 13" key="5">
    <citation type="journal article" date="2004" name="Proc. Natl. Acad. Sci. U.S.A.">
        <title>NMR structure of the KaiC-interacting C-terminal domain of KaiA, a circadian clock protein: implications for KaiA-KaiC interaction.</title>
        <authorList>
            <person name="Vakonakis I."/>
            <person name="Sun J."/>
            <person name="Wu T."/>
            <person name="Holzenburg A."/>
            <person name="Golden S.S."/>
            <person name="LiWang A.C."/>
        </authorList>
    </citation>
    <scope>STRUCTURE BY NMR OF 180-283</scope>
    <source>
        <strain>NIES-2133 / IAM M-273 / BP-1</strain>
    </source>
</reference>
<reference evidence="14 15" key="6">
    <citation type="journal article" date="2004" name="Proc. Natl. Acad. Sci. U.S.A.">
        <title>Structure of the C-terminal domain of the clock protein KaiA in complex with a KaiC-derived peptide: implications for KaiC regulation.</title>
        <authorList>
            <person name="Vakonakis I."/>
            <person name="LiWang A.C."/>
        </authorList>
    </citation>
    <scope>STRUCTURE BY NMR OF 180-283 IN COMPLEX WITH 488-518 OF KAIC</scope>
    <source>
        <strain>NIES-2133 / IAM M-273 / BP-1</strain>
    </source>
</reference>
<reference evidence="17" key="7">
    <citation type="journal article" date="2017" name="Science">
        <title>Structural basis of the day-night transition in a bacterial circadian clock.</title>
        <authorList>
            <person name="Tseng R."/>
            <person name="Goularte N.F."/>
            <person name="Chavan A."/>
            <person name="Luu J."/>
            <person name="Cohen S.E."/>
            <person name="Chang Y.G."/>
            <person name="Heisler J."/>
            <person name="Li S."/>
            <person name="Michael A.K."/>
            <person name="Tripathi S."/>
            <person name="Golden S.S."/>
            <person name="LiWang A."/>
            <person name="Partch C.L."/>
        </authorList>
    </citation>
    <scope>X-RAY CRYSTALLOGRAPHY (2.61 ANGSTROMS) OF 147-283 IN KAIABC COMPLEX</scope>
    <scope>SUBUNIT</scope>
    <scope>DOMAIN</scope>
    <scope>MUTAGENESIS OF LEU-155; LYS-158; LEU-159; LEU-163; ASN-212 AND ASP-266</scope>
    <source>
        <strain>NIES-2133 / IAM M-273 / BP-1</strain>
    </source>
</reference>
<evidence type="ECO:0000250" key="1">
    <source>
        <dbReference type="UniProtKB" id="Q79PF6"/>
    </source>
</evidence>
<evidence type="ECO:0000255" key="2">
    <source>
        <dbReference type="PROSITE-ProRule" id="PRU00760"/>
    </source>
</evidence>
<evidence type="ECO:0000255" key="3">
    <source>
        <dbReference type="PROSITE-ProRule" id="PRU00761"/>
    </source>
</evidence>
<evidence type="ECO:0000269" key="4">
    <source>
    </source>
</evidence>
<evidence type="ECO:0000269" key="5">
    <source>
    </source>
</evidence>
<evidence type="ECO:0000269" key="6">
    <source>
    </source>
</evidence>
<evidence type="ECO:0000303" key="7">
    <source ref="1"/>
</evidence>
<evidence type="ECO:0000305" key="8"/>
<evidence type="ECO:0000305" key="9">
    <source>
    </source>
</evidence>
<evidence type="ECO:0000312" key="10">
    <source>
        <dbReference type="EMBL" id="BAB85983.1"/>
    </source>
</evidence>
<evidence type="ECO:0000312" key="11">
    <source>
        <dbReference type="EMBL" id="BAC08033.1"/>
    </source>
</evidence>
<evidence type="ECO:0007744" key="12">
    <source>
        <dbReference type="PDB" id="1Q6A"/>
    </source>
</evidence>
<evidence type="ECO:0007744" key="13">
    <source>
        <dbReference type="PDB" id="1Q6B"/>
    </source>
</evidence>
<evidence type="ECO:0007744" key="14">
    <source>
        <dbReference type="PDB" id="1SUY"/>
    </source>
</evidence>
<evidence type="ECO:0007744" key="15">
    <source>
        <dbReference type="PDB" id="1SV1"/>
    </source>
</evidence>
<evidence type="ECO:0007744" key="16">
    <source>
        <dbReference type="PDB" id="1V2Z"/>
    </source>
</evidence>
<evidence type="ECO:0007744" key="17">
    <source>
        <dbReference type="PDB" id="5JWR"/>
    </source>
</evidence>
<evidence type="ECO:0007829" key="18">
    <source>
        <dbReference type="PDB" id="1V2Z"/>
    </source>
</evidence>
<evidence type="ECO:0007829" key="19">
    <source>
        <dbReference type="PDB" id="5JWR"/>
    </source>
</evidence>
<feature type="chain" id="PRO_0000217869" description="Circadian clock oscillator protein KaiA">
    <location>
        <begin position="1"/>
        <end position="283"/>
    </location>
</feature>
<feature type="domain" description="KaiA N-terminal" evidence="2">
    <location>
        <begin position="3"/>
        <end position="163"/>
    </location>
</feature>
<feature type="domain" description="KaiA C-terminal" evidence="3">
    <location>
        <begin position="173"/>
        <end position="281"/>
    </location>
</feature>
<feature type="region of interest" description="PsR domain, not required to form KaiA:KaiB:KaiC complex, or for a full KaiC phosphorylation cycle" evidence="5 6">
    <location>
        <begin position="1"/>
        <end position="146"/>
    </location>
</feature>
<feature type="region of interest" description="Flexible linker" evidence="1">
    <location>
        <begin position="164"/>
        <end position="172"/>
    </location>
</feature>
<feature type="mutagenesis site" description="Weakens KaiABC formation." evidence="6">
    <original>L</original>
    <variation>A</variation>
    <location>
        <position position="155"/>
    </location>
</feature>
<feature type="mutagenesis site" description="Weakens KaiABC formation." evidence="6">
    <original>K</original>
    <variation>A</variation>
    <location>
        <position position="158"/>
    </location>
</feature>
<feature type="mutagenesis site" description="Weakens KaiABC formation." evidence="6">
    <original>L</original>
    <variation>A</variation>
    <location>
        <position position="159"/>
    </location>
</feature>
<feature type="mutagenesis site" description="Weakens KaiABC formation." evidence="6">
    <original>L</original>
    <variation>A</variation>
    <location>
        <position position="163"/>
    </location>
</feature>
<feature type="mutagenesis site" description="Induces a change in the structure due to the absence of the hydrogen bond between D-266 and Y-204." evidence="4">
    <original>Y</original>
    <variation>F</variation>
    <location>
        <position position="204"/>
    </location>
</feature>
<feature type="mutagenesis site" description="Weakens KaiABC formation." evidence="6">
    <original>N</original>
    <variation>A</variation>
    <location>
        <position position="212"/>
    </location>
</feature>
<feature type="mutagenesis site" description="Weakens KaiABC formation." evidence="6">
    <original>D</original>
    <variation>A</variation>
    <location>
        <position position="266"/>
    </location>
</feature>
<feature type="mutagenesis site" description="No effect." evidence="4">
    <original>D</original>
    <variation>N</variation>
    <location>
        <position position="266"/>
    </location>
</feature>
<feature type="mutagenesis site" description="Induces a decrease in activity and ability to enhance KaiC phosphorylation." evidence="4">
    <original>H</original>
    <variation>A</variation>
    <location>
        <position position="270"/>
    </location>
</feature>
<feature type="helix" evidence="19">
    <location>
        <begin position="151"/>
        <end position="162"/>
    </location>
</feature>
<feature type="strand" evidence="19">
    <location>
        <begin position="166"/>
        <end position="171"/>
    </location>
</feature>
<feature type="helix" evidence="18">
    <location>
        <begin position="174"/>
        <end position="181"/>
    </location>
</feature>
<feature type="helix" evidence="18">
    <location>
        <begin position="187"/>
        <end position="203"/>
    </location>
</feature>
<feature type="helix" evidence="18">
    <location>
        <begin position="211"/>
        <end position="225"/>
    </location>
</feature>
<feature type="helix" evidence="18">
    <location>
        <begin position="229"/>
        <end position="246"/>
    </location>
</feature>
<feature type="helix" evidence="18">
    <location>
        <begin position="251"/>
        <end position="259"/>
    </location>
</feature>
<feature type="helix" evidence="18">
    <location>
        <begin position="260"/>
        <end position="276"/>
    </location>
</feature>
<sequence length="283" mass="32368">MAQSTALTICGLVYSPAIGQELVRLHTSDIDELVYFSSEREFCNYLEARRNSIACLILEWGEGTPQIITYLHHSATLLPAILIFPAAPAPPPAGPHYHIAEVILTTDQLDQLNRQIEEAITGFVKLCPGCAVPPHVLFRLPALKESSNVDPQHRLSQKLKERLGYLGVYYKRDTAFFFRRMSPADKRKLLDELRSIYRTIVLEYFNTDAKVNERIDEFVSKAFFADISVSQVLEIHVELMDTFSKQLKLEGRSEDILLDYRLTLIDVIAHLCEMYRRSIPREV</sequence>
<comment type="function">
    <text evidence="1 5">Key component of the KaiABC oscillator complex, which constitutes the main circadian regulator in cyanobacteria. Complex composition changes during the circadian cycle to control KaiC phosphorylation. KaiA stimulates KaiC autophosphorylation, while KaiB sequesters KaiA, leading to KaiC autodephosphorylation. KaiA binding to the KaiC CII domain during the subjective day yields KaiA(2-4):KaiC(6) complexes which stimulate KaiC autophosphorylation. Phospho-Ser-431 KaiC accumulation triggers binding of KaiB during the subjective night to form the KaiB(6):KaiC(6) complex, leading to changes in the output regulators CikA and SasA. KaiB(6):KaiC(6) formation exposes a site for KaiA binding on KaiB that sequesters KaiA from KaiC's CII domain, making the KaiC(6):KaiB(6):KaiA(12) complex resulting in KaiC autodephosphorylation. Complete dephosphorylation of KaiC leads to dissociation of KaiA(2):KaiB(1), completing 1 cycle of the Kai oscillator (By similarity). Formation of the KaiB:KaiC complex is promoted by KaiA, helping switch KaiC from its autophosphorylation to autodephosphatase function (PubMed:24112939).</text>
</comment>
<comment type="function">
    <text evidence="1">Binds oxidized quinones via the N-terminal PsR domain, allowing it to sense redox changes and possibly mediate clock input.</text>
</comment>
<comment type="subunit">
    <text evidence="5 6 9">Homodimer (Probable) (PubMed:28302851). The KaiABC complex composition changes during the circadian cycle to control KaiC phosphorylation. Complexes KaiC(6), KaiA(2-4):KaiC(6), KaiB(6):KaiC(6) and KaiC(6):KaiB(6):KaiA(12) are among the most important forms, many form cooperatively (PubMed:28302851). Binds to KaiB and KaiC, the N-terminus (pseudoreceiver domain PsR) is not required for either interaction. 1 KaiB binds to one subunit of the KaiA homodimer. KaiA and CikA bind to the same region of the KaiB(fs) form and therefore compete (PubMed:24112939, PubMed:28302851).</text>
</comment>
<comment type="interaction">
    <interactant intactId="EBI-701584">
        <id>Q79V62</id>
    </interactant>
    <interactant intactId="EBI-701584">
        <id>Q79V62</id>
        <label>kaiA</label>
    </interactant>
    <organismsDiffer>false</organismsDiffer>
    <experiments>4</experiments>
</comment>
<comment type="interaction">
    <interactant intactId="EBI-701584">
        <id>Q79V62</id>
    </interactant>
    <interactant intactId="EBI-701595">
        <id>Q79V60</id>
        <label>kaiC</label>
    </interactant>
    <organismsDiffer>false</organismsDiffer>
    <experiments>12</experiments>
</comment>
<comment type="domain">
    <text evidence="1 5 6">The KaiA C-terminal domain mediates homodimerization and formation of a stable complex with KaiB and KaiC. The N-terminal pseudoreceiver domain (PsR, residues 1-146 in these experiments) is not necessary for most KaiA functions, while the linker region (residues 147-179) between the 2 domains is probably required at least for KaiA:KaiB interaction (PubMed:24112939, PubMed:28302851). Undergoes large conformational changes in the KaiABC complex which inactivates the second KaiA monomer, preventing it from activating the KaiC CII domain (PubMed:28302851). The PsR domain binds oxidized quinones (By similarity).</text>
</comment>
<comment type="similarity">
    <text evidence="8">Belongs to the KaiA family.</text>
</comment>
<gene>
    <name evidence="7" type="primary">kaiA</name>
    <name type="ordered locus">tlr0481</name>
</gene>